<proteinExistence type="inferred from homology"/>
<protein>
    <recommendedName>
        <fullName evidence="1">Tyrosine--tRNA ligase</fullName>
        <ecNumber evidence="1">6.1.1.1</ecNumber>
    </recommendedName>
    <alternativeName>
        <fullName evidence="1">Tyrosyl-tRNA synthetase</fullName>
        <shortName evidence="1">TyrRS</shortName>
    </alternativeName>
</protein>
<organism>
    <name type="scientific">Haemophilus influenzae (strain 86-028NP)</name>
    <dbReference type="NCBI Taxonomy" id="281310"/>
    <lineage>
        <taxon>Bacteria</taxon>
        <taxon>Pseudomonadati</taxon>
        <taxon>Pseudomonadota</taxon>
        <taxon>Gammaproteobacteria</taxon>
        <taxon>Pasteurellales</taxon>
        <taxon>Pasteurellaceae</taxon>
        <taxon>Haemophilus</taxon>
    </lineage>
</organism>
<keyword id="KW-0030">Aminoacyl-tRNA synthetase</keyword>
<keyword id="KW-0067">ATP-binding</keyword>
<keyword id="KW-0963">Cytoplasm</keyword>
<keyword id="KW-0436">Ligase</keyword>
<keyword id="KW-0547">Nucleotide-binding</keyword>
<keyword id="KW-0648">Protein biosynthesis</keyword>
<keyword id="KW-0694">RNA-binding</keyword>
<name>SYY_HAEI8</name>
<comment type="function">
    <text evidence="1">Catalyzes the attachment of tyrosine to tRNA(Tyr) in a two-step reaction: tyrosine is first activated by ATP to form Tyr-AMP and then transferred to the acceptor end of tRNA(Tyr).</text>
</comment>
<comment type="catalytic activity">
    <reaction evidence="1">
        <text>tRNA(Tyr) + L-tyrosine + ATP = L-tyrosyl-tRNA(Tyr) + AMP + diphosphate + H(+)</text>
        <dbReference type="Rhea" id="RHEA:10220"/>
        <dbReference type="Rhea" id="RHEA-COMP:9706"/>
        <dbReference type="Rhea" id="RHEA-COMP:9707"/>
        <dbReference type="ChEBI" id="CHEBI:15378"/>
        <dbReference type="ChEBI" id="CHEBI:30616"/>
        <dbReference type="ChEBI" id="CHEBI:33019"/>
        <dbReference type="ChEBI" id="CHEBI:58315"/>
        <dbReference type="ChEBI" id="CHEBI:78442"/>
        <dbReference type="ChEBI" id="CHEBI:78536"/>
        <dbReference type="ChEBI" id="CHEBI:456215"/>
        <dbReference type="EC" id="6.1.1.1"/>
    </reaction>
</comment>
<comment type="subunit">
    <text evidence="1">Homodimer.</text>
</comment>
<comment type="subcellular location">
    <subcellularLocation>
        <location evidence="1">Cytoplasm</location>
    </subcellularLocation>
</comment>
<comment type="similarity">
    <text evidence="1">Belongs to the class-I aminoacyl-tRNA synthetase family. TyrS type 2 subfamily.</text>
</comment>
<dbReference type="EC" id="6.1.1.1" evidence="1"/>
<dbReference type="EMBL" id="CP000057">
    <property type="protein sequence ID" value="AAX88252.1"/>
    <property type="molecule type" value="Genomic_DNA"/>
</dbReference>
<dbReference type="RefSeq" id="WP_005657010.1">
    <property type="nucleotide sequence ID" value="NC_007146.2"/>
</dbReference>
<dbReference type="SMR" id="Q4QL45"/>
<dbReference type="GeneID" id="93220261"/>
<dbReference type="KEGG" id="hit:NTHI1432"/>
<dbReference type="HOGENOM" id="CLU_024003_5_0_6"/>
<dbReference type="Proteomes" id="UP000002525">
    <property type="component" value="Chromosome"/>
</dbReference>
<dbReference type="GO" id="GO:0005829">
    <property type="term" value="C:cytosol"/>
    <property type="evidence" value="ECO:0007669"/>
    <property type="project" value="TreeGrafter"/>
</dbReference>
<dbReference type="GO" id="GO:0005524">
    <property type="term" value="F:ATP binding"/>
    <property type="evidence" value="ECO:0007669"/>
    <property type="project" value="UniProtKB-UniRule"/>
</dbReference>
<dbReference type="GO" id="GO:0003723">
    <property type="term" value="F:RNA binding"/>
    <property type="evidence" value="ECO:0007669"/>
    <property type="project" value="UniProtKB-KW"/>
</dbReference>
<dbReference type="GO" id="GO:0004831">
    <property type="term" value="F:tyrosine-tRNA ligase activity"/>
    <property type="evidence" value="ECO:0007669"/>
    <property type="project" value="UniProtKB-UniRule"/>
</dbReference>
<dbReference type="GO" id="GO:0006437">
    <property type="term" value="P:tyrosyl-tRNA aminoacylation"/>
    <property type="evidence" value="ECO:0007669"/>
    <property type="project" value="UniProtKB-UniRule"/>
</dbReference>
<dbReference type="CDD" id="cd00165">
    <property type="entry name" value="S4"/>
    <property type="match status" value="1"/>
</dbReference>
<dbReference type="CDD" id="cd00805">
    <property type="entry name" value="TyrRS_core"/>
    <property type="match status" value="1"/>
</dbReference>
<dbReference type="FunFam" id="1.10.240.10:FF:000006">
    <property type="entry name" value="Tyrosine--tRNA ligase"/>
    <property type="match status" value="1"/>
</dbReference>
<dbReference type="FunFam" id="3.10.290.10:FF:000022">
    <property type="entry name" value="Tyrosine--tRNA ligase"/>
    <property type="match status" value="1"/>
</dbReference>
<dbReference type="FunFam" id="3.40.50.620:FF:000061">
    <property type="entry name" value="Tyrosine--tRNA ligase"/>
    <property type="match status" value="1"/>
</dbReference>
<dbReference type="Gene3D" id="3.40.50.620">
    <property type="entry name" value="HUPs"/>
    <property type="match status" value="1"/>
</dbReference>
<dbReference type="Gene3D" id="3.10.290.10">
    <property type="entry name" value="RNA-binding S4 domain"/>
    <property type="match status" value="1"/>
</dbReference>
<dbReference type="Gene3D" id="1.10.240.10">
    <property type="entry name" value="Tyrosyl-Transfer RNA Synthetase"/>
    <property type="match status" value="1"/>
</dbReference>
<dbReference type="HAMAP" id="MF_02007">
    <property type="entry name" value="Tyr_tRNA_synth_type2"/>
    <property type="match status" value="1"/>
</dbReference>
<dbReference type="InterPro" id="IPR001412">
    <property type="entry name" value="aa-tRNA-synth_I_CS"/>
</dbReference>
<dbReference type="InterPro" id="IPR002305">
    <property type="entry name" value="aa-tRNA-synth_Ic"/>
</dbReference>
<dbReference type="InterPro" id="IPR014729">
    <property type="entry name" value="Rossmann-like_a/b/a_fold"/>
</dbReference>
<dbReference type="InterPro" id="IPR002942">
    <property type="entry name" value="S4_RNA-bd"/>
</dbReference>
<dbReference type="InterPro" id="IPR036986">
    <property type="entry name" value="S4_RNA-bd_sf"/>
</dbReference>
<dbReference type="InterPro" id="IPR002307">
    <property type="entry name" value="Tyr-tRNA-ligase"/>
</dbReference>
<dbReference type="InterPro" id="IPR024088">
    <property type="entry name" value="Tyr-tRNA-ligase_bac-type"/>
</dbReference>
<dbReference type="InterPro" id="IPR024108">
    <property type="entry name" value="Tyr-tRNA-ligase_bac_2"/>
</dbReference>
<dbReference type="NCBIfam" id="TIGR00234">
    <property type="entry name" value="tyrS"/>
    <property type="match status" value="1"/>
</dbReference>
<dbReference type="PANTHER" id="PTHR11766:SF1">
    <property type="entry name" value="TYROSINE--TRNA LIGASE"/>
    <property type="match status" value="1"/>
</dbReference>
<dbReference type="PANTHER" id="PTHR11766">
    <property type="entry name" value="TYROSYL-TRNA SYNTHETASE"/>
    <property type="match status" value="1"/>
</dbReference>
<dbReference type="Pfam" id="PF01479">
    <property type="entry name" value="S4"/>
    <property type="match status" value="1"/>
</dbReference>
<dbReference type="Pfam" id="PF00579">
    <property type="entry name" value="tRNA-synt_1b"/>
    <property type="match status" value="1"/>
</dbReference>
<dbReference type="PRINTS" id="PR01040">
    <property type="entry name" value="TRNASYNTHTYR"/>
</dbReference>
<dbReference type="SMART" id="SM00363">
    <property type="entry name" value="S4"/>
    <property type="match status" value="1"/>
</dbReference>
<dbReference type="SUPFAM" id="SSF55174">
    <property type="entry name" value="Alpha-L RNA-binding motif"/>
    <property type="match status" value="1"/>
</dbReference>
<dbReference type="SUPFAM" id="SSF52374">
    <property type="entry name" value="Nucleotidylyl transferase"/>
    <property type="match status" value="1"/>
</dbReference>
<dbReference type="PROSITE" id="PS00178">
    <property type="entry name" value="AA_TRNA_LIGASE_I"/>
    <property type="match status" value="1"/>
</dbReference>
<dbReference type="PROSITE" id="PS50889">
    <property type="entry name" value="S4"/>
    <property type="match status" value="1"/>
</dbReference>
<sequence>MTNINTVLAELKRGTDEILSEADLIEKLKENRPLKVKLGADPTAPDIHLGHTVVLNKLRQFQQLGHEVYFLIGDFTGMVGDPSGKNATRPPLSREDVLRNAETYKEQIYKILDPQKTKIVFNSEWLSKLGTEGMIRLASNYTVARMLERDDFKKRFGNNQPIAIHEFIYPLLQGYDSVALDADVELGGTDQKFNLLVGRELQKSAGKKPQVAITLPLLVGLDGEKKMSKSLGNYIGVTEAPSDMFGKVMSISDELMWDWYNLLSFRPLSEIAQLKSEVEKGKNPRDVKILLAKELIARFHNEEAANAAEQEFINRFQKGAMPDEMPEFTFSGEIGLATLLKEAGLVPSTSEAIRSAQQGGVKINGEKVDNVKDNAPKGTNVYQVGKRKFARVTVE</sequence>
<reference key="1">
    <citation type="journal article" date="2005" name="J. Bacteriol.">
        <title>Genomic sequence of an otitis media isolate of nontypeable Haemophilus influenzae: comparative study with H. influenzae serotype d, strain KW20.</title>
        <authorList>
            <person name="Harrison A."/>
            <person name="Dyer D.W."/>
            <person name="Gillaspy A."/>
            <person name="Ray W.C."/>
            <person name="Mungur R."/>
            <person name="Carson M.B."/>
            <person name="Zhong H."/>
            <person name="Gipson J."/>
            <person name="Gipson M."/>
            <person name="Johnson L.S."/>
            <person name="Lewis L."/>
            <person name="Bakaletz L.O."/>
            <person name="Munson R.S. Jr."/>
        </authorList>
    </citation>
    <scope>NUCLEOTIDE SEQUENCE [LARGE SCALE GENOMIC DNA]</scope>
    <source>
        <strain>86-028NP</strain>
    </source>
</reference>
<feature type="chain" id="PRO_0000236724" description="Tyrosine--tRNA ligase">
    <location>
        <begin position="1"/>
        <end position="395"/>
    </location>
</feature>
<feature type="domain" description="S4 RNA-binding" evidence="1">
    <location>
        <begin position="334"/>
        <end position="394"/>
    </location>
</feature>
<feature type="short sequence motif" description="'HIGH' region">
    <location>
        <begin position="42"/>
        <end position="51"/>
    </location>
</feature>
<feature type="short sequence motif" description="'KMSKS' region">
    <location>
        <begin position="226"/>
        <end position="230"/>
    </location>
</feature>
<feature type="binding site" evidence="1">
    <location>
        <position position="229"/>
    </location>
    <ligand>
        <name>ATP</name>
        <dbReference type="ChEBI" id="CHEBI:30616"/>
    </ligand>
</feature>
<gene>
    <name evidence="1" type="primary">tyrS</name>
    <name type="ordered locus">NTHI1432</name>
</gene>
<accession>Q4QL45</accession>
<evidence type="ECO:0000255" key="1">
    <source>
        <dbReference type="HAMAP-Rule" id="MF_02007"/>
    </source>
</evidence>